<reference key="1">
    <citation type="journal article" date="2009" name="BMC Genomics">
        <title>Pseudogene accumulation in the evolutionary histories of Salmonella enterica serovars Paratyphi A and Typhi.</title>
        <authorList>
            <person name="Holt K.E."/>
            <person name="Thomson N.R."/>
            <person name="Wain J."/>
            <person name="Langridge G.C."/>
            <person name="Hasan R."/>
            <person name="Bhutta Z.A."/>
            <person name="Quail M.A."/>
            <person name="Norbertczak H."/>
            <person name="Walker D."/>
            <person name="Simmonds M."/>
            <person name="White B."/>
            <person name="Bason N."/>
            <person name="Mungall K."/>
            <person name="Dougan G."/>
            <person name="Parkhill J."/>
        </authorList>
    </citation>
    <scope>NUCLEOTIDE SEQUENCE [LARGE SCALE GENOMIC DNA]</scope>
    <source>
        <strain>AKU_12601</strain>
    </source>
</reference>
<organism>
    <name type="scientific">Salmonella paratyphi A (strain AKU_12601)</name>
    <dbReference type="NCBI Taxonomy" id="554290"/>
    <lineage>
        <taxon>Bacteria</taxon>
        <taxon>Pseudomonadati</taxon>
        <taxon>Pseudomonadota</taxon>
        <taxon>Gammaproteobacteria</taxon>
        <taxon>Enterobacterales</taxon>
        <taxon>Enterobacteriaceae</taxon>
        <taxon>Salmonella</taxon>
    </lineage>
</organism>
<protein>
    <recommendedName>
        <fullName evidence="1">Sialic acid transporter NanT</fullName>
    </recommendedName>
    <alternativeName>
        <fullName evidence="1">Sialic acid permease</fullName>
    </alternativeName>
    <alternativeName>
        <fullName evidence="1">Sialic acid/H(+) symporter</fullName>
    </alternativeName>
</protein>
<sequence length="496" mass="53647">MSTSTQNIPWYRHLNRAQWRAFSAAWLGYLLDGFDFVLIALVLTEVQSEFGLTTVQAASLISAAFISRWFGGLLLGAMGDRYGRRLAMVSSIILFSVGTLACGFAPGYTTMFIARLVIGMGMAGEYGSSATYVIESWPKHLRNKASGFLISGFSVGAVVAAQVYSLVVPVWGWRALFFIGILPIIFALWLRKNIPEAEDWKEKHAGKAPVRTMVDILYRGEHRIINMLMTFAAAAALWFCFAGNLQNAAIVAGLGLLCAVIFISFMVQSSGKRWPTGVMLMLVVLFAFLYSWPIQALLPTYLKTELAYDPHTVANVLFFSGFGAAVGCCVGGFLGDWLGTRKAYVCSLLASQILIIPVFAIGGTNVWVLGLLLFFQQMLGQGIAGILPKLIGGYFDTDQRAAGLGFTYNVGALGGALAPILGALIAQRLDLGTALASLSFSLTFVVILLIGLDMPSRVQRWLRPEALRTHDAIDDKPFSGAVPLGSGKGAFVKTKS</sequence>
<dbReference type="EMBL" id="FM200053">
    <property type="protein sequence ID" value="CAR61242.1"/>
    <property type="molecule type" value="Genomic_DNA"/>
</dbReference>
<dbReference type="RefSeq" id="WP_000108076.1">
    <property type="nucleotide sequence ID" value="NC_011147.1"/>
</dbReference>
<dbReference type="SMR" id="B5BGP4"/>
<dbReference type="KEGG" id="sek:SSPA2993"/>
<dbReference type="HOGENOM" id="CLU_001265_46_8_6"/>
<dbReference type="Proteomes" id="UP000001869">
    <property type="component" value="Chromosome"/>
</dbReference>
<dbReference type="GO" id="GO:0005886">
    <property type="term" value="C:plasma membrane"/>
    <property type="evidence" value="ECO:0007669"/>
    <property type="project" value="UniProtKB-SubCell"/>
</dbReference>
<dbReference type="GO" id="GO:0046943">
    <property type="term" value="F:carboxylic acid transmembrane transporter activity"/>
    <property type="evidence" value="ECO:0007669"/>
    <property type="project" value="TreeGrafter"/>
</dbReference>
<dbReference type="GO" id="GO:0015538">
    <property type="term" value="F:sialic acid:proton symporter activity"/>
    <property type="evidence" value="ECO:0007669"/>
    <property type="project" value="UniProtKB-UniRule"/>
</dbReference>
<dbReference type="CDD" id="cd17316">
    <property type="entry name" value="MFS_SV2_like"/>
    <property type="match status" value="1"/>
</dbReference>
<dbReference type="FunFam" id="1.20.1250.20:FF:000027">
    <property type="entry name" value="Sialic acid transporter NanT"/>
    <property type="match status" value="1"/>
</dbReference>
<dbReference type="FunFam" id="1.20.1250.20:FF:000038">
    <property type="entry name" value="Sialic acid transporter NanT"/>
    <property type="match status" value="1"/>
</dbReference>
<dbReference type="Gene3D" id="1.20.1250.20">
    <property type="entry name" value="MFS general substrate transporter like domains"/>
    <property type="match status" value="2"/>
</dbReference>
<dbReference type="HAMAP" id="MF_01238">
    <property type="entry name" value="MFS_NanT"/>
    <property type="match status" value="1"/>
</dbReference>
<dbReference type="InterPro" id="IPR011701">
    <property type="entry name" value="MFS"/>
</dbReference>
<dbReference type="InterPro" id="IPR020846">
    <property type="entry name" value="MFS_dom"/>
</dbReference>
<dbReference type="InterPro" id="IPR036259">
    <property type="entry name" value="MFS_trans_sf"/>
</dbReference>
<dbReference type="InterPro" id="IPR004742">
    <property type="entry name" value="SA_transporter"/>
</dbReference>
<dbReference type="NCBIfam" id="TIGR00891">
    <property type="entry name" value="2A0112"/>
    <property type="match status" value="1"/>
</dbReference>
<dbReference type="NCBIfam" id="NF003024">
    <property type="entry name" value="PRK03893.1"/>
    <property type="match status" value="1"/>
</dbReference>
<dbReference type="PANTHER" id="PTHR23508">
    <property type="entry name" value="CARBOXYLIC ACID TRANSPORTER PROTEIN HOMOLOG"/>
    <property type="match status" value="1"/>
</dbReference>
<dbReference type="PANTHER" id="PTHR23508:SF3">
    <property type="entry name" value="SIALIC ACID TRANSPORTER NANT"/>
    <property type="match status" value="1"/>
</dbReference>
<dbReference type="Pfam" id="PF07690">
    <property type="entry name" value="MFS_1"/>
    <property type="match status" value="2"/>
</dbReference>
<dbReference type="SUPFAM" id="SSF103473">
    <property type="entry name" value="MFS general substrate transporter"/>
    <property type="match status" value="1"/>
</dbReference>
<dbReference type="PROSITE" id="PS50850">
    <property type="entry name" value="MFS"/>
    <property type="match status" value="1"/>
</dbReference>
<comment type="function">
    <text evidence="1">Catalyzes the proton-dependent transport of sialic acid.</text>
</comment>
<comment type="catalytic activity">
    <reaction evidence="1">
        <text>N-acetylneuraminate(in) + H(+)(in) = N-acetylneuraminate(out) + H(+)(out)</text>
        <dbReference type="Rhea" id="RHEA:28987"/>
        <dbReference type="ChEBI" id="CHEBI:15378"/>
        <dbReference type="ChEBI" id="CHEBI:35418"/>
    </reaction>
</comment>
<comment type="subcellular location">
    <subcellularLocation>
        <location evidence="1">Cell inner membrane</location>
        <topology evidence="1">Multi-pass membrane protein</topology>
    </subcellularLocation>
</comment>
<comment type="similarity">
    <text evidence="1">Belongs to the major facilitator superfamily. Sialate:H(+) symporter (SHS) (TC 2.A.1.12) family.</text>
</comment>
<gene>
    <name evidence="1" type="primary">nanT</name>
    <name type="ordered locus">SSPA2993</name>
</gene>
<name>NANT_SALPK</name>
<feature type="chain" id="PRO_1000214066" description="Sialic acid transporter NanT">
    <location>
        <begin position="1"/>
        <end position="496"/>
    </location>
</feature>
<feature type="transmembrane region" description="Helical" evidence="1">
    <location>
        <begin position="22"/>
        <end position="42"/>
    </location>
</feature>
<feature type="transmembrane region" description="Helical" evidence="1">
    <location>
        <begin position="58"/>
        <end position="78"/>
    </location>
</feature>
<feature type="transmembrane region" description="Helical" evidence="1">
    <location>
        <begin position="86"/>
        <end position="106"/>
    </location>
</feature>
<feature type="transmembrane region" description="Helical" evidence="1">
    <location>
        <begin position="116"/>
        <end position="136"/>
    </location>
</feature>
<feature type="transmembrane region" description="Helical" evidence="1">
    <location>
        <begin position="148"/>
        <end position="168"/>
    </location>
</feature>
<feature type="transmembrane region" description="Helical" evidence="1">
    <location>
        <begin position="170"/>
        <end position="190"/>
    </location>
</feature>
<feature type="transmembrane region" description="Helical" evidence="1">
    <location>
        <begin position="224"/>
        <end position="244"/>
    </location>
</feature>
<feature type="transmembrane region" description="Helical" evidence="1">
    <location>
        <begin position="247"/>
        <end position="267"/>
    </location>
</feature>
<feature type="transmembrane region" description="Helical" evidence="1">
    <location>
        <begin position="278"/>
        <end position="298"/>
    </location>
</feature>
<feature type="transmembrane region" description="Helical" evidence="1">
    <location>
        <begin position="313"/>
        <end position="333"/>
    </location>
</feature>
<feature type="transmembrane region" description="Helical" evidence="1">
    <location>
        <begin position="353"/>
        <end position="373"/>
    </location>
</feature>
<feature type="transmembrane region" description="Helical" evidence="1">
    <location>
        <begin position="374"/>
        <end position="394"/>
    </location>
</feature>
<feature type="transmembrane region" description="Helical" evidence="1">
    <location>
        <begin position="406"/>
        <end position="426"/>
    </location>
</feature>
<feature type="transmembrane region" description="Helical" evidence="1">
    <location>
        <begin position="431"/>
        <end position="451"/>
    </location>
</feature>
<proteinExistence type="inferred from homology"/>
<keyword id="KW-0997">Cell inner membrane</keyword>
<keyword id="KW-1003">Cell membrane</keyword>
<keyword id="KW-0472">Membrane</keyword>
<keyword id="KW-0762">Sugar transport</keyword>
<keyword id="KW-0812">Transmembrane</keyword>
<keyword id="KW-1133">Transmembrane helix</keyword>
<keyword id="KW-0813">Transport</keyword>
<evidence type="ECO:0000255" key="1">
    <source>
        <dbReference type="HAMAP-Rule" id="MF_01238"/>
    </source>
</evidence>
<accession>B5BGP4</accession>